<comment type="function">
    <text evidence="1">This protein is involved in the repair of mismatches in DNA. It is possible that it carries out the mismatch recognition step. This protein has a weak ATPase activity.</text>
</comment>
<comment type="similarity">
    <text evidence="1">Belongs to the DNA mismatch repair MutS family.</text>
</comment>
<proteinExistence type="inferred from homology"/>
<keyword id="KW-0067">ATP-binding</keyword>
<keyword id="KW-0227">DNA damage</keyword>
<keyword id="KW-0234">DNA repair</keyword>
<keyword id="KW-0238">DNA-binding</keyword>
<keyword id="KW-0547">Nucleotide-binding</keyword>
<reference key="1">
    <citation type="journal article" date="2007" name="Environ. Microbiol.">
        <title>Whole-genome analysis of the ammonia-oxidizing bacterium, Nitrosomonas eutropha C91: implications for niche adaptation.</title>
        <authorList>
            <person name="Stein L.Y."/>
            <person name="Arp D.J."/>
            <person name="Berube P.M."/>
            <person name="Chain P.S."/>
            <person name="Hauser L."/>
            <person name="Jetten M.S."/>
            <person name="Klotz M.G."/>
            <person name="Larimer F.W."/>
            <person name="Norton J.M."/>
            <person name="Op den Camp H.J.M."/>
            <person name="Shin M."/>
            <person name="Wei X."/>
        </authorList>
    </citation>
    <scope>NUCLEOTIDE SEQUENCE [LARGE SCALE GENOMIC DNA]</scope>
    <source>
        <strain>DSM 101675 / C91 / Nm57</strain>
    </source>
</reference>
<name>MUTS_NITEC</name>
<dbReference type="EMBL" id="CP000450">
    <property type="protein sequence ID" value="ABI60245.1"/>
    <property type="molecule type" value="Genomic_DNA"/>
</dbReference>
<dbReference type="SMR" id="Q0AEI7"/>
<dbReference type="STRING" id="335283.Neut_2022"/>
<dbReference type="KEGG" id="net:Neut_2022"/>
<dbReference type="eggNOG" id="COG0249">
    <property type="taxonomic scope" value="Bacteria"/>
</dbReference>
<dbReference type="HOGENOM" id="CLU_002472_4_0_4"/>
<dbReference type="OrthoDB" id="9802448at2"/>
<dbReference type="Proteomes" id="UP000001966">
    <property type="component" value="Chromosome"/>
</dbReference>
<dbReference type="GO" id="GO:0005829">
    <property type="term" value="C:cytosol"/>
    <property type="evidence" value="ECO:0007669"/>
    <property type="project" value="TreeGrafter"/>
</dbReference>
<dbReference type="GO" id="GO:0005524">
    <property type="term" value="F:ATP binding"/>
    <property type="evidence" value="ECO:0007669"/>
    <property type="project" value="UniProtKB-UniRule"/>
</dbReference>
<dbReference type="GO" id="GO:0140664">
    <property type="term" value="F:ATP-dependent DNA damage sensor activity"/>
    <property type="evidence" value="ECO:0007669"/>
    <property type="project" value="InterPro"/>
</dbReference>
<dbReference type="GO" id="GO:0003684">
    <property type="term" value="F:damaged DNA binding"/>
    <property type="evidence" value="ECO:0007669"/>
    <property type="project" value="UniProtKB-UniRule"/>
</dbReference>
<dbReference type="GO" id="GO:0030983">
    <property type="term" value="F:mismatched DNA binding"/>
    <property type="evidence" value="ECO:0007669"/>
    <property type="project" value="InterPro"/>
</dbReference>
<dbReference type="GO" id="GO:0006298">
    <property type="term" value="P:mismatch repair"/>
    <property type="evidence" value="ECO:0007669"/>
    <property type="project" value="UniProtKB-UniRule"/>
</dbReference>
<dbReference type="CDD" id="cd03284">
    <property type="entry name" value="ABC_MutS1"/>
    <property type="match status" value="1"/>
</dbReference>
<dbReference type="FunFam" id="3.40.1170.10:FF:000001">
    <property type="entry name" value="DNA mismatch repair protein MutS"/>
    <property type="match status" value="1"/>
</dbReference>
<dbReference type="FunFam" id="3.40.50.300:FF:000870">
    <property type="entry name" value="MutS protein homolog 4"/>
    <property type="match status" value="1"/>
</dbReference>
<dbReference type="Gene3D" id="1.10.1420.10">
    <property type="match status" value="2"/>
</dbReference>
<dbReference type="Gene3D" id="6.10.140.430">
    <property type="match status" value="1"/>
</dbReference>
<dbReference type="Gene3D" id="3.40.1170.10">
    <property type="entry name" value="DNA repair protein MutS, domain I"/>
    <property type="match status" value="1"/>
</dbReference>
<dbReference type="Gene3D" id="3.30.420.110">
    <property type="entry name" value="MutS, connector domain"/>
    <property type="match status" value="1"/>
</dbReference>
<dbReference type="Gene3D" id="3.40.50.300">
    <property type="entry name" value="P-loop containing nucleotide triphosphate hydrolases"/>
    <property type="match status" value="1"/>
</dbReference>
<dbReference type="HAMAP" id="MF_00096">
    <property type="entry name" value="MutS"/>
    <property type="match status" value="1"/>
</dbReference>
<dbReference type="InterPro" id="IPR005748">
    <property type="entry name" value="DNA_mismatch_repair_MutS"/>
</dbReference>
<dbReference type="InterPro" id="IPR007695">
    <property type="entry name" value="DNA_mismatch_repair_MutS-lik_N"/>
</dbReference>
<dbReference type="InterPro" id="IPR017261">
    <property type="entry name" value="DNA_mismatch_repair_MutS/MSH"/>
</dbReference>
<dbReference type="InterPro" id="IPR000432">
    <property type="entry name" value="DNA_mismatch_repair_MutS_C"/>
</dbReference>
<dbReference type="InterPro" id="IPR007861">
    <property type="entry name" value="DNA_mismatch_repair_MutS_clamp"/>
</dbReference>
<dbReference type="InterPro" id="IPR007696">
    <property type="entry name" value="DNA_mismatch_repair_MutS_core"/>
</dbReference>
<dbReference type="InterPro" id="IPR016151">
    <property type="entry name" value="DNA_mismatch_repair_MutS_N"/>
</dbReference>
<dbReference type="InterPro" id="IPR036187">
    <property type="entry name" value="DNA_mismatch_repair_MutS_sf"/>
</dbReference>
<dbReference type="InterPro" id="IPR007860">
    <property type="entry name" value="DNA_mmatch_repair_MutS_con_dom"/>
</dbReference>
<dbReference type="InterPro" id="IPR045076">
    <property type="entry name" value="MutS"/>
</dbReference>
<dbReference type="InterPro" id="IPR036678">
    <property type="entry name" value="MutS_con_dom_sf"/>
</dbReference>
<dbReference type="InterPro" id="IPR027417">
    <property type="entry name" value="P-loop_NTPase"/>
</dbReference>
<dbReference type="NCBIfam" id="TIGR01070">
    <property type="entry name" value="mutS1"/>
    <property type="match status" value="1"/>
</dbReference>
<dbReference type="NCBIfam" id="NF003810">
    <property type="entry name" value="PRK05399.1"/>
    <property type="match status" value="1"/>
</dbReference>
<dbReference type="PANTHER" id="PTHR11361:SF34">
    <property type="entry name" value="DNA MISMATCH REPAIR PROTEIN MSH1, MITOCHONDRIAL"/>
    <property type="match status" value="1"/>
</dbReference>
<dbReference type="PANTHER" id="PTHR11361">
    <property type="entry name" value="DNA MISMATCH REPAIR PROTEIN MUTS FAMILY MEMBER"/>
    <property type="match status" value="1"/>
</dbReference>
<dbReference type="Pfam" id="PF01624">
    <property type="entry name" value="MutS_I"/>
    <property type="match status" value="1"/>
</dbReference>
<dbReference type="Pfam" id="PF05188">
    <property type="entry name" value="MutS_II"/>
    <property type="match status" value="1"/>
</dbReference>
<dbReference type="Pfam" id="PF05192">
    <property type="entry name" value="MutS_III"/>
    <property type="match status" value="1"/>
</dbReference>
<dbReference type="Pfam" id="PF05190">
    <property type="entry name" value="MutS_IV"/>
    <property type="match status" value="1"/>
</dbReference>
<dbReference type="Pfam" id="PF00488">
    <property type="entry name" value="MutS_V"/>
    <property type="match status" value="1"/>
</dbReference>
<dbReference type="PIRSF" id="PIRSF037677">
    <property type="entry name" value="DNA_mis_repair_Msh6"/>
    <property type="match status" value="1"/>
</dbReference>
<dbReference type="SMART" id="SM00534">
    <property type="entry name" value="MUTSac"/>
    <property type="match status" value="1"/>
</dbReference>
<dbReference type="SMART" id="SM00533">
    <property type="entry name" value="MUTSd"/>
    <property type="match status" value="1"/>
</dbReference>
<dbReference type="SUPFAM" id="SSF55271">
    <property type="entry name" value="DNA repair protein MutS, domain I"/>
    <property type="match status" value="1"/>
</dbReference>
<dbReference type="SUPFAM" id="SSF53150">
    <property type="entry name" value="DNA repair protein MutS, domain II"/>
    <property type="match status" value="1"/>
</dbReference>
<dbReference type="SUPFAM" id="SSF48334">
    <property type="entry name" value="DNA repair protein MutS, domain III"/>
    <property type="match status" value="1"/>
</dbReference>
<dbReference type="SUPFAM" id="SSF52540">
    <property type="entry name" value="P-loop containing nucleoside triphosphate hydrolases"/>
    <property type="match status" value="1"/>
</dbReference>
<dbReference type="PROSITE" id="PS00486">
    <property type="entry name" value="DNA_MISMATCH_REPAIR_2"/>
    <property type="match status" value="1"/>
</dbReference>
<feature type="chain" id="PRO_0000335186" description="DNA mismatch repair protein MutS">
    <location>
        <begin position="1"/>
        <end position="880"/>
    </location>
</feature>
<feature type="binding site" evidence="1">
    <location>
        <begin position="635"/>
        <end position="642"/>
    </location>
    <ligand>
        <name>ATP</name>
        <dbReference type="ChEBI" id="CHEBI:30616"/>
    </ligand>
</feature>
<evidence type="ECO:0000255" key="1">
    <source>
        <dbReference type="HAMAP-Rule" id="MF_00096"/>
    </source>
</evidence>
<organism>
    <name type="scientific">Nitrosomonas eutropha (strain DSM 101675 / C91 / Nm57)</name>
    <dbReference type="NCBI Taxonomy" id="335283"/>
    <lineage>
        <taxon>Bacteria</taxon>
        <taxon>Pseudomonadati</taxon>
        <taxon>Pseudomonadota</taxon>
        <taxon>Betaproteobacteria</taxon>
        <taxon>Nitrosomonadales</taxon>
        <taxon>Nitrosomonadaceae</taxon>
        <taxon>Nitrosomonas</taxon>
    </lineage>
</organism>
<gene>
    <name evidence="1" type="primary">mutS</name>
    <name type="ordered locus">Neut_2022</name>
</gene>
<accession>Q0AEI7</accession>
<sequence length="880" mass="97972">MTTSGNSINKPDHSAHTPMMQQYLRIKTQHTDKLLFYRMGDFYELFYEDAEKAARLLDITLTHRGSSAGEPIKMAGVPFHAADQYLAKLVKLGESIAICEQIGDPATSKGPVERQVVRIITPGTLTDAGLLEERGNSIVLTLALHHGVIGLAWLNLAAGDMRVLETSPDNLASELERLHPSEILLPESLALPVILNSFTAPKRLPDWQFDYEHAMQQLTRQFGTRDLNAFGCEELRAAIMAAGALFEYVRLTQHTATDESATQVLGHLQTLRVERPETYLRMDAATRRNLEITLTLRGEEAPTLSSLLDICATSMGSRLLRHWLHHPLRNRITLQQRLDAVSDLIGAKPGILYAGIRERLKHIADIERITSRIALRTARPRDLSGLRDSLTALPEIIKLITTSTAIAIHRFVPAMEPDTTLTQLLVHALQPVPGAVIREGGVIADGYDAELDELRALQKNCGEFLLQLEARERERTGIPTLKVEYNRVHGFYIEVTRIHGEKIPADYRRRQTLKNAERYSIPELQVFENKTLTAREQALAQEKKLYEQLLEQLADFIIPLQEIARSVAELDVLCAFAERADLFGYTKPVFTDDPALDIEAGRHPVVENQIEQYIANDIQLGAVTREGRQMLIITGPNMGGKSTYMRQTALIILLAHCGSFVPAGSARIGPIDQIFTRIGAADDLAGGRSTFMVEMTEAASILRNATAQSLVLVDEIGRGTSTFDGLALAFAIARHLLTQNQSYTLFATHYFELTRLAEEFPQAINVHVTAVEHKRRIVFLHRIEEGSASRSYGLHVAALAGVPDKVIRNAGKILAQLEQEALSKSPQQTLFETIEENAEAAPASAHPVLDYLEQLHPDELTPREALEQLYLIKSMANRIK</sequence>
<protein>
    <recommendedName>
        <fullName evidence="1">DNA mismatch repair protein MutS</fullName>
    </recommendedName>
</protein>